<proteinExistence type="inferred from homology"/>
<reference key="1">
    <citation type="journal article" date="2000" name="Nature">
        <title>Complete genome sequence of Pseudomonas aeruginosa PAO1, an opportunistic pathogen.</title>
        <authorList>
            <person name="Stover C.K."/>
            <person name="Pham X.-Q.T."/>
            <person name="Erwin A.L."/>
            <person name="Mizoguchi S.D."/>
            <person name="Warrener P."/>
            <person name="Hickey M.J."/>
            <person name="Brinkman F.S.L."/>
            <person name="Hufnagle W.O."/>
            <person name="Kowalik D.J."/>
            <person name="Lagrou M."/>
            <person name="Garber R.L."/>
            <person name="Goltry L."/>
            <person name="Tolentino E."/>
            <person name="Westbrock-Wadman S."/>
            <person name="Yuan Y."/>
            <person name="Brody L.L."/>
            <person name="Coulter S.N."/>
            <person name="Folger K.R."/>
            <person name="Kas A."/>
            <person name="Larbig K."/>
            <person name="Lim R.M."/>
            <person name="Smith K.A."/>
            <person name="Spencer D.H."/>
            <person name="Wong G.K.-S."/>
            <person name="Wu Z."/>
            <person name="Paulsen I.T."/>
            <person name="Reizer J."/>
            <person name="Saier M.H. Jr."/>
            <person name="Hancock R.E.W."/>
            <person name="Lory S."/>
            <person name="Olson M.V."/>
        </authorList>
    </citation>
    <scope>NUCLEOTIDE SEQUENCE [LARGE SCALE GENOMIC DNA]</scope>
    <source>
        <strain>ATCC 15692 / DSM 22644 / CIP 104116 / JCM 14847 / LMG 12228 / 1C / PRS 101 / PAO1</strain>
    </source>
</reference>
<evidence type="ECO:0000255" key="1">
    <source>
        <dbReference type="HAMAP-Rule" id="MF_00205"/>
    </source>
</evidence>
<gene>
    <name evidence="1" type="primary">uvrA</name>
    <name type="ordered locus">PA4234</name>
</gene>
<accession>Q9HWG0</accession>
<dbReference type="EMBL" id="AE004091">
    <property type="protein sequence ID" value="AAG07622.1"/>
    <property type="molecule type" value="Genomic_DNA"/>
</dbReference>
<dbReference type="PIR" id="E83117">
    <property type="entry name" value="E83117"/>
</dbReference>
<dbReference type="RefSeq" id="NP_252924.1">
    <property type="nucleotide sequence ID" value="NC_002516.2"/>
</dbReference>
<dbReference type="RefSeq" id="WP_003093663.1">
    <property type="nucleotide sequence ID" value="NZ_QZGE01000028.1"/>
</dbReference>
<dbReference type="SMR" id="Q9HWG0"/>
<dbReference type="FunCoup" id="Q9HWG0">
    <property type="interactions" value="361"/>
</dbReference>
<dbReference type="STRING" id="208964.PA4234"/>
<dbReference type="PaxDb" id="208964-PA4234"/>
<dbReference type="GeneID" id="881827"/>
<dbReference type="KEGG" id="pae:PA4234"/>
<dbReference type="PATRIC" id="fig|208964.12.peg.4435"/>
<dbReference type="PseudoCAP" id="PA4234"/>
<dbReference type="HOGENOM" id="CLU_001370_0_2_6"/>
<dbReference type="InParanoid" id="Q9HWG0"/>
<dbReference type="OrthoDB" id="9809851at2"/>
<dbReference type="PhylomeDB" id="Q9HWG0"/>
<dbReference type="BioCyc" id="PAER208964:G1FZ6-4307-MONOMER"/>
<dbReference type="Proteomes" id="UP000002438">
    <property type="component" value="Chromosome"/>
</dbReference>
<dbReference type="GO" id="GO:0005737">
    <property type="term" value="C:cytoplasm"/>
    <property type="evidence" value="ECO:0007669"/>
    <property type="project" value="UniProtKB-SubCell"/>
</dbReference>
<dbReference type="GO" id="GO:0009380">
    <property type="term" value="C:excinuclease repair complex"/>
    <property type="evidence" value="ECO:0007669"/>
    <property type="project" value="InterPro"/>
</dbReference>
<dbReference type="GO" id="GO:0005524">
    <property type="term" value="F:ATP binding"/>
    <property type="evidence" value="ECO:0007669"/>
    <property type="project" value="UniProtKB-UniRule"/>
</dbReference>
<dbReference type="GO" id="GO:0016887">
    <property type="term" value="F:ATP hydrolysis activity"/>
    <property type="evidence" value="ECO:0007669"/>
    <property type="project" value="InterPro"/>
</dbReference>
<dbReference type="GO" id="GO:0003677">
    <property type="term" value="F:DNA binding"/>
    <property type="evidence" value="ECO:0007669"/>
    <property type="project" value="UniProtKB-UniRule"/>
</dbReference>
<dbReference type="GO" id="GO:0009381">
    <property type="term" value="F:excinuclease ABC activity"/>
    <property type="evidence" value="ECO:0007669"/>
    <property type="project" value="UniProtKB-UniRule"/>
</dbReference>
<dbReference type="GO" id="GO:0008270">
    <property type="term" value="F:zinc ion binding"/>
    <property type="evidence" value="ECO:0007669"/>
    <property type="project" value="UniProtKB-UniRule"/>
</dbReference>
<dbReference type="GO" id="GO:0006289">
    <property type="term" value="P:nucleotide-excision repair"/>
    <property type="evidence" value="ECO:0007669"/>
    <property type="project" value="UniProtKB-UniRule"/>
</dbReference>
<dbReference type="GO" id="GO:0009432">
    <property type="term" value="P:SOS response"/>
    <property type="evidence" value="ECO:0007669"/>
    <property type="project" value="UniProtKB-UniRule"/>
</dbReference>
<dbReference type="CDD" id="cd03270">
    <property type="entry name" value="ABC_UvrA_I"/>
    <property type="match status" value="1"/>
</dbReference>
<dbReference type="CDD" id="cd03271">
    <property type="entry name" value="ABC_UvrA_II"/>
    <property type="match status" value="1"/>
</dbReference>
<dbReference type="FunFam" id="1.10.8.280:FF:000001">
    <property type="entry name" value="UvrABC system protein A"/>
    <property type="match status" value="1"/>
</dbReference>
<dbReference type="FunFam" id="1.20.1580.10:FF:000002">
    <property type="entry name" value="UvrABC system protein A"/>
    <property type="match status" value="1"/>
</dbReference>
<dbReference type="FunFam" id="3.30.190.20:FF:000003">
    <property type="entry name" value="UvrABC system protein A"/>
    <property type="match status" value="1"/>
</dbReference>
<dbReference type="Gene3D" id="1.10.8.280">
    <property type="entry name" value="ABC transporter ATPase domain-like"/>
    <property type="match status" value="1"/>
</dbReference>
<dbReference type="Gene3D" id="1.20.1580.10">
    <property type="entry name" value="ABC transporter ATPase like domain"/>
    <property type="match status" value="2"/>
</dbReference>
<dbReference type="Gene3D" id="3.30.1490.20">
    <property type="entry name" value="ATP-grasp fold, A domain"/>
    <property type="match status" value="1"/>
</dbReference>
<dbReference type="Gene3D" id="3.40.50.300">
    <property type="entry name" value="P-loop containing nucleotide triphosphate hydrolases"/>
    <property type="match status" value="2"/>
</dbReference>
<dbReference type="HAMAP" id="MF_00205">
    <property type="entry name" value="UvrA"/>
    <property type="match status" value="1"/>
</dbReference>
<dbReference type="InterPro" id="IPR003439">
    <property type="entry name" value="ABC_transporter-like_ATP-bd"/>
</dbReference>
<dbReference type="InterPro" id="IPR017871">
    <property type="entry name" value="ABC_transporter-like_CS"/>
</dbReference>
<dbReference type="InterPro" id="IPR013815">
    <property type="entry name" value="ATP_grasp_subdomain_1"/>
</dbReference>
<dbReference type="InterPro" id="IPR027417">
    <property type="entry name" value="P-loop_NTPase"/>
</dbReference>
<dbReference type="InterPro" id="IPR004602">
    <property type="entry name" value="UvrA"/>
</dbReference>
<dbReference type="InterPro" id="IPR041552">
    <property type="entry name" value="UvrA_DNA-bd"/>
</dbReference>
<dbReference type="InterPro" id="IPR041102">
    <property type="entry name" value="UvrA_inter"/>
</dbReference>
<dbReference type="NCBIfam" id="NF001503">
    <property type="entry name" value="PRK00349.1"/>
    <property type="match status" value="1"/>
</dbReference>
<dbReference type="NCBIfam" id="TIGR00630">
    <property type="entry name" value="uvra"/>
    <property type="match status" value="1"/>
</dbReference>
<dbReference type="PANTHER" id="PTHR43152">
    <property type="entry name" value="UVRABC SYSTEM PROTEIN A"/>
    <property type="match status" value="1"/>
</dbReference>
<dbReference type="PANTHER" id="PTHR43152:SF3">
    <property type="entry name" value="UVRABC SYSTEM PROTEIN A"/>
    <property type="match status" value="1"/>
</dbReference>
<dbReference type="Pfam" id="PF17755">
    <property type="entry name" value="UvrA_DNA-bind"/>
    <property type="match status" value="1"/>
</dbReference>
<dbReference type="Pfam" id="PF17760">
    <property type="entry name" value="UvrA_inter"/>
    <property type="match status" value="1"/>
</dbReference>
<dbReference type="SUPFAM" id="SSF52540">
    <property type="entry name" value="P-loop containing nucleoside triphosphate hydrolases"/>
    <property type="match status" value="2"/>
</dbReference>
<dbReference type="PROSITE" id="PS00211">
    <property type="entry name" value="ABC_TRANSPORTER_1"/>
    <property type="match status" value="2"/>
</dbReference>
<dbReference type="PROSITE" id="PS50893">
    <property type="entry name" value="ABC_TRANSPORTER_2"/>
    <property type="match status" value="2"/>
</dbReference>
<organism>
    <name type="scientific">Pseudomonas aeruginosa (strain ATCC 15692 / DSM 22644 / CIP 104116 / JCM 14847 / LMG 12228 / 1C / PRS 101 / PAO1)</name>
    <dbReference type="NCBI Taxonomy" id="208964"/>
    <lineage>
        <taxon>Bacteria</taxon>
        <taxon>Pseudomonadati</taxon>
        <taxon>Pseudomonadota</taxon>
        <taxon>Gammaproteobacteria</taxon>
        <taxon>Pseudomonadales</taxon>
        <taxon>Pseudomonadaceae</taxon>
        <taxon>Pseudomonas</taxon>
    </lineage>
</organism>
<comment type="function">
    <text evidence="1">The UvrABC repair system catalyzes the recognition and processing of DNA lesions. UvrA is an ATPase and a DNA-binding protein. A damage recognition complex composed of 2 UvrA and 2 UvrB subunits scans DNA for abnormalities. When the presence of a lesion has been verified by UvrB, the UvrA molecules dissociate.</text>
</comment>
<comment type="subunit">
    <text evidence="1">Forms a heterotetramer with UvrB during the search for lesions.</text>
</comment>
<comment type="subcellular location">
    <subcellularLocation>
        <location evidence="1">Cytoplasm</location>
    </subcellularLocation>
</comment>
<comment type="similarity">
    <text evidence="1">Belongs to the ABC transporter superfamily. UvrA family.</text>
</comment>
<sequence length="945" mass="104489">MDKILIRGARTHNLKNVDLTLPRDKLIVITGLSGSGKSSLAFDTLYAEGQRRYVESLSAYARQFLSMMEKPDVDTIEGLSPAISIEQKSTSHNPRSTVGTITEIYDYLRLLYARVGTPRCPDHDIPLEAQTVSQMVDQVLALPEGSKLMLLAPVIRERKGEHLAVFDEMRAQGFVRARVDGKLYELDEVPKLDKQKKHSIDVVVDRFKVRADLQQRLAESFETALSLADGIALVAPMDEDEDVEEIIFSARFACPVCGHSISELEPKLFSFNNPAGACPTCDGLGVKQFFDARRVVNGELTLAEGAIRGWDRRNVYYFQMLGSLAQHYGFSLEEPFDELGAEHQKVVLYGSGRENVDFRYLNDRGDIVKRSHPFEGILPNLERRYRETESATVREELAKFLSTQPCPDCHGTRLRREARHVWVGDRTLPAITAMPVGEACEYAAGLSLTGRRGEIAAKILKEIRDRLQFLVNVGLDYLTLDRSADTLSGGEAQRIRLASQIGAGLVGVMYILDEPSIGLHQRDNERLLGTLTHLRNLGNTVIVVEHDEDAIRLADYVVDIGPGAGVHGGQVVAEGTPDQVMNHPDSLTGKYLSGRKKIAVPAKRTPRDKKKLLKLKGARGNNLQNVNLEIPVGLFTCITGVSGSGKSTLINNTLFPITATALNGATTLEVAPYDSFDGLQHLDKVVDIDQSPIGRTPRSNPATYTGLFTPIRELFSGVPEARSRGYGPGRFSFNVKGGRCEACQGDGVIKVEMHFLPDIYVPCDVCKGKRYNRETLEIRYKGKSIHEVLEMTIEEAREFFDAVPALARKLQTLMDVGLSYIKLGQSATTLSGGEAQRVKLSRELSKRDTGKTLYILDEPTTGLHFADIQQLLDVLHRLRDHGNTVVVIEHNLDVIKTADWLVDLGPEGGSKGGQIIANGTPEQVAEMPQSHTGHFLKPLLERDRA</sequence>
<feature type="chain" id="PRO_0000093078" description="UvrABC system protein A">
    <location>
        <begin position="1"/>
        <end position="945"/>
    </location>
</feature>
<feature type="domain" description="ABC transporter 1" evidence="1">
    <location>
        <begin position="310"/>
        <end position="587"/>
    </location>
</feature>
<feature type="domain" description="ABC transporter 2" evidence="1">
    <location>
        <begin position="607"/>
        <end position="937"/>
    </location>
</feature>
<feature type="zinc finger region" description="C4-type" evidence="1">
    <location>
        <begin position="254"/>
        <end position="281"/>
    </location>
</feature>
<feature type="zinc finger region" description="C4-type" evidence="1">
    <location>
        <begin position="740"/>
        <end position="766"/>
    </location>
</feature>
<feature type="binding site" evidence="1">
    <location>
        <begin position="31"/>
        <end position="38"/>
    </location>
    <ligand>
        <name>ATP</name>
        <dbReference type="ChEBI" id="CHEBI:30616"/>
    </ligand>
</feature>
<feature type="binding site" evidence="1">
    <location>
        <begin position="640"/>
        <end position="647"/>
    </location>
    <ligand>
        <name>ATP</name>
        <dbReference type="ChEBI" id="CHEBI:30616"/>
    </ligand>
</feature>
<name>UVRA_PSEAE</name>
<protein>
    <recommendedName>
        <fullName evidence="1">UvrABC system protein A</fullName>
        <shortName evidence="1">UvrA protein</shortName>
    </recommendedName>
    <alternativeName>
        <fullName evidence="1">Excinuclease ABC subunit A</fullName>
    </alternativeName>
</protein>
<keyword id="KW-0067">ATP-binding</keyword>
<keyword id="KW-0963">Cytoplasm</keyword>
<keyword id="KW-0227">DNA damage</keyword>
<keyword id="KW-0228">DNA excision</keyword>
<keyword id="KW-0234">DNA repair</keyword>
<keyword id="KW-0238">DNA-binding</keyword>
<keyword id="KW-0267">Excision nuclease</keyword>
<keyword id="KW-0479">Metal-binding</keyword>
<keyword id="KW-0547">Nucleotide-binding</keyword>
<keyword id="KW-1185">Reference proteome</keyword>
<keyword id="KW-0677">Repeat</keyword>
<keyword id="KW-0742">SOS response</keyword>
<keyword id="KW-0862">Zinc</keyword>
<keyword id="KW-0863">Zinc-finger</keyword>